<accession>B7LMB2</accession>
<feature type="chain" id="PRO_1000191317" description="Probable malate:quinone oxidoreductase">
    <location>
        <begin position="1"/>
        <end position="548"/>
    </location>
</feature>
<feature type="region of interest" description="Disordered" evidence="2">
    <location>
        <begin position="522"/>
        <end position="548"/>
    </location>
</feature>
<feature type="compositionally biased region" description="Basic and acidic residues" evidence="2">
    <location>
        <begin position="539"/>
        <end position="548"/>
    </location>
</feature>
<proteinExistence type="inferred from homology"/>
<sequence length="548" mass="60022">MKKVTAMLFSMAVGLNAGSAAAKAKASEEQETDVLLIGGGIMSATLGTYLRELEPEWSMTMVERLDSVAQESSNGWNNAGTGHSALMELNYTPQNADGSISIEKAVAINEAFQISRQFWAHQVERGVLRTPRSFINTVPHMSFVWGEDNVNFLRARYAALQQSSLFRGMRYSEDHEQIKEWAPLVMEGRDPQQKVAATRTEIGTDVNYGEITRQLIASLQKKSNFSLQLSSEVRALKRNGDKSWTVTIADLKNGTVHNIRAKFVFIGAGGAALKLLQESGIPEAKDYAGFPVGGQFLVSENPDVVNHHLAKVYGKASVGAPPMSVPHIDTRVLDGKRVVLFGPFATFSTKFLKNGSLWDLMSSTTTSNVLPMMHVGLDNFDLVKYLISQVMLSEDDRFAALKEYYPQAKKEDWRLWQAGQRVQIIKRDADKGGVLRLGTEVVSDQQGTIAALLGASPGASTAAPIMLNLLEKVFGDRVSSPQWQATLKAIVPSYGSKLNGNVAATERELQYTSEVLGLKYDKPQAADSTPKAQLKPQPARKEVADIAL</sequence>
<gene>
    <name evidence="1" type="primary">mqo</name>
    <name type="ordered locus">EFER_0950</name>
</gene>
<comment type="catalytic activity">
    <reaction evidence="1">
        <text>(S)-malate + a quinone = a quinol + oxaloacetate</text>
        <dbReference type="Rhea" id="RHEA:46012"/>
        <dbReference type="ChEBI" id="CHEBI:15589"/>
        <dbReference type="ChEBI" id="CHEBI:16452"/>
        <dbReference type="ChEBI" id="CHEBI:24646"/>
        <dbReference type="ChEBI" id="CHEBI:132124"/>
        <dbReference type="EC" id="1.1.5.4"/>
    </reaction>
</comment>
<comment type="cofactor">
    <cofactor evidence="1">
        <name>FAD</name>
        <dbReference type="ChEBI" id="CHEBI:57692"/>
    </cofactor>
</comment>
<comment type="pathway">
    <text evidence="1">Carbohydrate metabolism; tricarboxylic acid cycle; oxaloacetate from (S)-malate (quinone route): step 1/1.</text>
</comment>
<comment type="similarity">
    <text evidence="1">Belongs to the MQO family.</text>
</comment>
<evidence type="ECO:0000255" key="1">
    <source>
        <dbReference type="HAMAP-Rule" id="MF_00212"/>
    </source>
</evidence>
<evidence type="ECO:0000256" key="2">
    <source>
        <dbReference type="SAM" id="MobiDB-lite"/>
    </source>
</evidence>
<keyword id="KW-0274">FAD</keyword>
<keyword id="KW-0285">Flavoprotein</keyword>
<keyword id="KW-0560">Oxidoreductase</keyword>
<keyword id="KW-0816">Tricarboxylic acid cycle</keyword>
<dbReference type="EC" id="1.1.5.4" evidence="1"/>
<dbReference type="EMBL" id="CU928158">
    <property type="protein sequence ID" value="CAQ88485.1"/>
    <property type="molecule type" value="Genomic_DNA"/>
</dbReference>
<dbReference type="RefSeq" id="WP_000758036.1">
    <property type="nucleotide sequence ID" value="NC_011740.1"/>
</dbReference>
<dbReference type="SMR" id="B7LMB2"/>
<dbReference type="GeneID" id="75057992"/>
<dbReference type="KEGG" id="efe:EFER_0950"/>
<dbReference type="HOGENOM" id="CLU_028151_0_0_6"/>
<dbReference type="OrthoDB" id="9763983at2"/>
<dbReference type="UniPathway" id="UPA00223">
    <property type="reaction ID" value="UER01008"/>
</dbReference>
<dbReference type="Proteomes" id="UP000000745">
    <property type="component" value="Chromosome"/>
</dbReference>
<dbReference type="GO" id="GO:0047545">
    <property type="term" value="F:2-hydroxyglutarate dehydrogenase activity"/>
    <property type="evidence" value="ECO:0007669"/>
    <property type="project" value="TreeGrafter"/>
</dbReference>
<dbReference type="GO" id="GO:0008924">
    <property type="term" value="F:L-malate dehydrogenase (quinone) activity"/>
    <property type="evidence" value="ECO:0007669"/>
    <property type="project" value="UniProtKB-UniRule"/>
</dbReference>
<dbReference type="GO" id="GO:0006099">
    <property type="term" value="P:tricarboxylic acid cycle"/>
    <property type="evidence" value="ECO:0007669"/>
    <property type="project" value="UniProtKB-UniRule"/>
</dbReference>
<dbReference type="Gene3D" id="3.30.9.10">
    <property type="entry name" value="D-Amino Acid Oxidase, subunit A, domain 2"/>
    <property type="match status" value="1"/>
</dbReference>
<dbReference type="Gene3D" id="3.50.50.60">
    <property type="entry name" value="FAD/NAD(P)-binding domain"/>
    <property type="match status" value="1"/>
</dbReference>
<dbReference type="HAMAP" id="MF_00212">
    <property type="entry name" value="MQO"/>
    <property type="match status" value="1"/>
</dbReference>
<dbReference type="InterPro" id="IPR036188">
    <property type="entry name" value="FAD/NAD-bd_sf"/>
</dbReference>
<dbReference type="InterPro" id="IPR006231">
    <property type="entry name" value="MQO"/>
</dbReference>
<dbReference type="NCBIfam" id="TIGR01320">
    <property type="entry name" value="mal_quin_oxido"/>
    <property type="match status" value="1"/>
</dbReference>
<dbReference type="NCBIfam" id="NF003603">
    <property type="entry name" value="PRK05257.1-1"/>
    <property type="match status" value="1"/>
</dbReference>
<dbReference type="NCBIfam" id="NF003605">
    <property type="entry name" value="PRK05257.1-4"/>
    <property type="match status" value="1"/>
</dbReference>
<dbReference type="NCBIfam" id="NF003606">
    <property type="entry name" value="PRK05257.2-1"/>
    <property type="match status" value="1"/>
</dbReference>
<dbReference type="NCBIfam" id="NF003608">
    <property type="entry name" value="PRK05257.2-4"/>
    <property type="match status" value="1"/>
</dbReference>
<dbReference type="NCBIfam" id="NF003611">
    <property type="entry name" value="PRK05257.3-2"/>
    <property type="match status" value="1"/>
</dbReference>
<dbReference type="NCBIfam" id="NF009875">
    <property type="entry name" value="PRK13339.1"/>
    <property type="match status" value="1"/>
</dbReference>
<dbReference type="PANTHER" id="PTHR43104">
    <property type="entry name" value="L-2-HYDROXYGLUTARATE DEHYDROGENASE, MITOCHONDRIAL"/>
    <property type="match status" value="1"/>
</dbReference>
<dbReference type="PANTHER" id="PTHR43104:SF2">
    <property type="entry name" value="L-2-HYDROXYGLUTARATE DEHYDROGENASE, MITOCHONDRIAL"/>
    <property type="match status" value="1"/>
</dbReference>
<dbReference type="Pfam" id="PF06039">
    <property type="entry name" value="Mqo"/>
    <property type="match status" value="1"/>
</dbReference>
<dbReference type="SUPFAM" id="SSF51905">
    <property type="entry name" value="FAD/NAD(P)-binding domain"/>
    <property type="match status" value="1"/>
</dbReference>
<reference key="1">
    <citation type="journal article" date="2009" name="PLoS Genet.">
        <title>Organised genome dynamics in the Escherichia coli species results in highly diverse adaptive paths.</title>
        <authorList>
            <person name="Touchon M."/>
            <person name="Hoede C."/>
            <person name="Tenaillon O."/>
            <person name="Barbe V."/>
            <person name="Baeriswyl S."/>
            <person name="Bidet P."/>
            <person name="Bingen E."/>
            <person name="Bonacorsi S."/>
            <person name="Bouchier C."/>
            <person name="Bouvet O."/>
            <person name="Calteau A."/>
            <person name="Chiapello H."/>
            <person name="Clermont O."/>
            <person name="Cruveiller S."/>
            <person name="Danchin A."/>
            <person name="Diard M."/>
            <person name="Dossat C."/>
            <person name="Karoui M.E."/>
            <person name="Frapy E."/>
            <person name="Garry L."/>
            <person name="Ghigo J.M."/>
            <person name="Gilles A.M."/>
            <person name="Johnson J."/>
            <person name="Le Bouguenec C."/>
            <person name="Lescat M."/>
            <person name="Mangenot S."/>
            <person name="Martinez-Jehanne V."/>
            <person name="Matic I."/>
            <person name="Nassif X."/>
            <person name="Oztas S."/>
            <person name="Petit M.A."/>
            <person name="Pichon C."/>
            <person name="Rouy Z."/>
            <person name="Ruf C.S."/>
            <person name="Schneider D."/>
            <person name="Tourret J."/>
            <person name="Vacherie B."/>
            <person name="Vallenet D."/>
            <person name="Medigue C."/>
            <person name="Rocha E.P.C."/>
            <person name="Denamur E."/>
        </authorList>
    </citation>
    <scope>NUCLEOTIDE SEQUENCE [LARGE SCALE GENOMIC DNA]</scope>
    <source>
        <strain>ATCC 35469 / DSM 13698 / BCRC 15582 / CCUG 18766 / IAM 14443 / JCM 21226 / LMG 7866 / NBRC 102419 / NCTC 12128 / CDC 0568-73</strain>
    </source>
</reference>
<organism>
    <name type="scientific">Escherichia fergusonii (strain ATCC 35469 / DSM 13698 / CCUG 18766 / IAM 14443 / JCM 21226 / LMG 7866 / NBRC 102419 / NCTC 12128 / CDC 0568-73)</name>
    <dbReference type="NCBI Taxonomy" id="585054"/>
    <lineage>
        <taxon>Bacteria</taxon>
        <taxon>Pseudomonadati</taxon>
        <taxon>Pseudomonadota</taxon>
        <taxon>Gammaproteobacteria</taxon>
        <taxon>Enterobacterales</taxon>
        <taxon>Enterobacteriaceae</taxon>
        <taxon>Escherichia</taxon>
    </lineage>
</organism>
<name>MQO_ESCF3</name>
<protein>
    <recommendedName>
        <fullName evidence="1">Probable malate:quinone oxidoreductase</fullName>
        <ecNumber evidence="1">1.1.5.4</ecNumber>
    </recommendedName>
    <alternativeName>
        <fullName evidence="1">MQO</fullName>
    </alternativeName>
    <alternativeName>
        <fullName evidence="1">Malate dehydrogenase [quinone]</fullName>
    </alternativeName>
</protein>